<dbReference type="EMBL" id="DQ291132">
    <property type="protein sequence ID" value="ABB81955.1"/>
    <property type="molecule type" value="Genomic_DNA"/>
</dbReference>
<dbReference type="RefSeq" id="YP_635887.1">
    <property type="nucleotide sequence ID" value="NC_008099.1"/>
</dbReference>
<dbReference type="SMR" id="Q20EV8"/>
<dbReference type="GeneID" id="4100081"/>
<dbReference type="GO" id="GO:0009535">
    <property type="term" value="C:chloroplast thylakoid membrane"/>
    <property type="evidence" value="ECO:0007669"/>
    <property type="project" value="UniProtKB-SubCell"/>
</dbReference>
<dbReference type="GO" id="GO:0045259">
    <property type="term" value="C:proton-transporting ATP synthase complex"/>
    <property type="evidence" value="ECO:0007669"/>
    <property type="project" value="UniProtKB-KW"/>
</dbReference>
<dbReference type="GO" id="GO:0046933">
    <property type="term" value="F:proton-transporting ATP synthase activity, rotational mechanism"/>
    <property type="evidence" value="ECO:0007669"/>
    <property type="project" value="UniProtKB-UniRule"/>
</dbReference>
<dbReference type="CDD" id="cd06503">
    <property type="entry name" value="ATP-synt_Fo_b"/>
    <property type="match status" value="1"/>
</dbReference>
<dbReference type="HAMAP" id="MF_01398">
    <property type="entry name" value="ATP_synth_b_bprime"/>
    <property type="match status" value="1"/>
</dbReference>
<dbReference type="InterPro" id="IPR002146">
    <property type="entry name" value="ATP_synth_b/b'su_bac/chlpt"/>
</dbReference>
<dbReference type="PANTHER" id="PTHR34264">
    <property type="entry name" value="ATP SYNTHASE SUBUNIT B, CHLOROPLASTIC"/>
    <property type="match status" value="1"/>
</dbReference>
<dbReference type="PANTHER" id="PTHR34264:SF3">
    <property type="entry name" value="ATP SYNTHASE SUBUNIT B, CHLOROPLASTIC"/>
    <property type="match status" value="1"/>
</dbReference>
<dbReference type="Pfam" id="PF00430">
    <property type="entry name" value="ATP-synt_B"/>
    <property type="match status" value="1"/>
</dbReference>
<keyword id="KW-0066">ATP synthesis</keyword>
<keyword id="KW-0138">CF(0)</keyword>
<keyword id="KW-0150">Chloroplast</keyword>
<keyword id="KW-0375">Hydrogen ion transport</keyword>
<keyword id="KW-0406">Ion transport</keyword>
<keyword id="KW-0472">Membrane</keyword>
<keyword id="KW-0934">Plastid</keyword>
<keyword id="KW-0793">Thylakoid</keyword>
<keyword id="KW-0812">Transmembrane</keyword>
<keyword id="KW-1133">Transmembrane helix</keyword>
<keyword id="KW-0813">Transport</keyword>
<feature type="chain" id="PRO_0000368964" description="ATP synthase subunit b, chloroplastic">
    <location>
        <begin position="1"/>
        <end position="183"/>
    </location>
</feature>
<feature type="transmembrane region" description="Helical" evidence="1">
    <location>
        <begin position="33"/>
        <end position="51"/>
    </location>
</feature>
<protein>
    <recommendedName>
        <fullName evidence="1">ATP synthase subunit b, chloroplastic</fullName>
    </recommendedName>
    <alternativeName>
        <fullName evidence="1">ATP synthase F(0) sector subunit b</fullName>
    </alternativeName>
    <alternativeName>
        <fullName evidence="1">ATPase subunit I</fullName>
    </alternativeName>
</protein>
<organism>
    <name type="scientific">Oltmannsiellopsis viridis</name>
    <name type="common">Marine flagellate</name>
    <name type="synonym">Oltmannsiella viridis</name>
    <dbReference type="NCBI Taxonomy" id="51324"/>
    <lineage>
        <taxon>Eukaryota</taxon>
        <taxon>Viridiplantae</taxon>
        <taxon>Chlorophyta</taxon>
        <taxon>Ulvophyceae</taxon>
        <taxon>Oltmannsiellopsidales</taxon>
        <taxon>Oltmannsiellopsidaceae</taxon>
        <taxon>Oltmannsiellopsis</taxon>
    </lineage>
</organism>
<geneLocation type="chloroplast"/>
<name>ATPF_OLTVI</name>
<gene>
    <name evidence="1" type="primary">atpF</name>
</gene>
<comment type="function">
    <text evidence="1">F(1)F(0) ATP synthase produces ATP from ADP in the presence of a proton or sodium gradient. F-type ATPases consist of two structural domains, F(1) containing the extramembraneous catalytic core and F(0) containing the membrane proton channel, linked together by a central stalk and a peripheral stalk. During catalysis, ATP synthesis in the catalytic domain of F(1) is coupled via a rotary mechanism of the central stalk subunits to proton translocation.</text>
</comment>
<comment type="function">
    <text evidence="1">Component of the F(0) channel, it forms part of the peripheral stalk, linking F(1) to F(0).</text>
</comment>
<comment type="subunit">
    <text evidence="1">F-type ATPases have 2 components, F(1) - the catalytic core - and F(0) - the membrane proton channel. F(1) has five subunits: alpha(3), beta(3), gamma(1), delta(1), epsilon(1). F(0) has four main subunits: a(1), b(1), b'(1) and c(10-14). The alpha and beta chains form an alternating ring which encloses part of the gamma chain. F(1) is attached to F(0) by a central stalk formed by the gamma and epsilon chains, while a peripheral stalk is formed by the delta, b and b' chains.</text>
</comment>
<comment type="subcellular location">
    <subcellularLocation>
        <location evidence="1">Plastid</location>
        <location evidence="1">Chloroplast thylakoid membrane</location>
        <topology evidence="1">Single-pass membrane protein</topology>
    </subcellularLocation>
</comment>
<comment type="miscellaneous">
    <text>In plastids the F-type ATPase is also known as CF(1)CF(0).</text>
</comment>
<comment type="similarity">
    <text evidence="1">Belongs to the ATPase B chain family.</text>
</comment>
<evidence type="ECO:0000255" key="1">
    <source>
        <dbReference type="HAMAP-Rule" id="MF_01398"/>
    </source>
</evidence>
<sequence>METYMDTLNQLSTICFGHGDGFGINTNILETNIINLSVVIGVVVSFGGDALRSLLDNRKETILANLQEADLRAKEAQEKLAAARLQLEQAQTKAQEIRQQGTITAEQEKQLCIKQAEADMARLEDVKQQTLRLQQQRAMSQVSQQVIALALQKVRQKLQDAANSAFHTSVNNSNIAFFTKYKV</sequence>
<reference key="1">
    <citation type="journal article" date="2006" name="BMC Biol.">
        <title>The complete chloroplast DNA sequence of the green alga Oltmannsiellopsis viridis reveals a distinctive quadripartite architecture in the chloroplast genome of early diverging ulvophytes.</title>
        <authorList>
            <person name="Pombert J.-F."/>
            <person name="Lemieux C."/>
            <person name="Turmel M."/>
        </authorList>
    </citation>
    <scope>NUCLEOTIDE SEQUENCE [LARGE SCALE GENOMIC DNA]</scope>
</reference>
<proteinExistence type="inferred from homology"/>
<accession>Q20EV8</accession>